<reference key="1">
    <citation type="submission" date="2008-05" db="EMBL/GenBank/DDBJ databases">
        <title>Complete sequence of chromosome of Geobacter lovleyi SZ.</title>
        <authorList>
            <consortium name="US DOE Joint Genome Institute"/>
            <person name="Lucas S."/>
            <person name="Copeland A."/>
            <person name="Lapidus A."/>
            <person name="Glavina del Rio T."/>
            <person name="Dalin E."/>
            <person name="Tice H."/>
            <person name="Bruce D."/>
            <person name="Goodwin L."/>
            <person name="Pitluck S."/>
            <person name="Chertkov O."/>
            <person name="Meincke L."/>
            <person name="Brettin T."/>
            <person name="Detter J.C."/>
            <person name="Han C."/>
            <person name="Tapia R."/>
            <person name="Kuske C.R."/>
            <person name="Schmutz J."/>
            <person name="Larimer F."/>
            <person name="Land M."/>
            <person name="Hauser L."/>
            <person name="Kyrpides N."/>
            <person name="Mikhailova N."/>
            <person name="Sung Y."/>
            <person name="Fletcher K.E."/>
            <person name="Ritalahti K.M."/>
            <person name="Loeffler F.E."/>
            <person name="Richardson P."/>
        </authorList>
    </citation>
    <scope>NUCLEOTIDE SEQUENCE [LARGE SCALE GENOMIC DNA]</scope>
    <source>
        <strain>ATCC BAA-1151 / DSM 17278 / SZ</strain>
    </source>
</reference>
<sequence>MQIVAIIPARYGSTRFPGKALADLAGKPMIQHVYEQTIRASLVSRAIVATDDRRIADVIHQIGGEAIMTSTDHETGTDRLAEVARGLDADIIVNVQGDEPLIDPAMINQAIEPFLGNPGLKMGTLKSRVKCLHDFLSPNVVKVVTDNNGYALYFSRSPLPFFRDKWQDLKDEAFASGRLLCFKHVGLYVYQRNFLLEYAAMPQTFLELSEKLEQLRALENGIRIRVVETEFESLGVDTPDDLNKAKERMKQG</sequence>
<dbReference type="EC" id="2.7.7.38" evidence="1"/>
<dbReference type="EMBL" id="CP001089">
    <property type="protein sequence ID" value="ACD95444.1"/>
    <property type="molecule type" value="Genomic_DNA"/>
</dbReference>
<dbReference type="RefSeq" id="WP_012469784.1">
    <property type="nucleotide sequence ID" value="NC_010814.1"/>
</dbReference>
<dbReference type="SMR" id="B3EAK6"/>
<dbReference type="STRING" id="398767.Glov_1728"/>
<dbReference type="KEGG" id="glo:Glov_1728"/>
<dbReference type="eggNOG" id="COG1212">
    <property type="taxonomic scope" value="Bacteria"/>
</dbReference>
<dbReference type="HOGENOM" id="CLU_065038_0_1_7"/>
<dbReference type="OrthoDB" id="9815559at2"/>
<dbReference type="UniPathway" id="UPA00030"/>
<dbReference type="UniPathway" id="UPA00358">
    <property type="reaction ID" value="UER00476"/>
</dbReference>
<dbReference type="Proteomes" id="UP000002420">
    <property type="component" value="Chromosome"/>
</dbReference>
<dbReference type="GO" id="GO:0005829">
    <property type="term" value="C:cytosol"/>
    <property type="evidence" value="ECO:0007669"/>
    <property type="project" value="TreeGrafter"/>
</dbReference>
<dbReference type="GO" id="GO:0008690">
    <property type="term" value="F:3-deoxy-manno-octulosonate cytidylyltransferase activity"/>
    <property type="evidence" value="ECO:0007669"/>
    <property type="project" value="UniProtKB-UniRule"/>
</dbReference>
<dbReference type="GO" id="GO:0033468">
    <property type="term" value="P:CMP-keto-3-deoxy-D-manno-octulosonic acid biosynthetic process"/>
    <property type="evidence" value="ECO:0007669"/>
    <property type="project" value="UniProtKB-UniRule"/>
</dbReference>
<dbReference type="GO" id="GO:0009103">
    <property type="term" value="P:lipopolysaccharide biosynthetic process"/>
    <property type="evidence" value="ECO:0007669"/>
    <property type="project" value="UniProtKB-UniRule"/>
</dbReference>
<dbReference type="CDD" id="cd02517">
    <property type="entry name" value="CMP-KDO-Synthetase"/>
    <property type="match status" value="1"/>
</dbReference>
<dbReference type="FunFam" id="3.90.550.10:FF:000011">
    <property type="entry name" value="3-deoxy-manno-octulosonate cytidylyltransferase"/>
    <property type="match status" value="1"/>
</dbReference>
<dbReference type="Gene3D" id="3.90.550.10">
    <property type="entry name" value="Spore Coat Polysaccharide Biosynthesis Protein SpsA, Chain A"/>
    <property type="match status" value="1"/>
</dbReference>
<dbReference type="HAMAP" id="MF_00057">
    <property type="entry name" value="KdsB"/>
    <property type="match status" value="1"/>
</dbReference>
<dbReference type="InterPro" id="IPR003329">
    <property type="entry name" value="Cytidylyl_trans"/>
</dbReference>
<dbReference type="InterPro" id="IPR004528">
    <property type="entry name" value="KdsB"/>
</dbReference>
<dbReference type="InterPro" id="IPR029044">
    <property type="entry name" value="Nucleotide-diphossugar_trans"/>
</dbReference>
<dbReference type="NCBIfam" id="TIGR00466">
    <property type="entry name" value="kdsB"/>
    <property type="match status" value="1"/>
</dbReference>
<dbReference type="NCBIfam" id="NF003950">
    <property type="entry name" value="PRK05450.1-3"/>
    <property type="match status" value="1"/>
</dbReference>
<dbReference type="NCBIfam" id="NF003952">
    <property type="entry name" value="PRK05450.1-5"/>
    <property type="match status" value="1"/>
</dbReference>
<dbReference type="NCBIfam" id="NF009905">
    <property type="entry name" value="PRK13368.1"/>
    <property type="match status" value="1"/>
</dbReference>
<dbReference type="PANTHER" id="PTHR42866">
    <property type="entry name" value="3-DEOXY-MANNO-OCTULOSONATE CYTIDYLYLTRANSFERASE"/>
    <property type="match status" value="1"/>
</dbReference>
<dbReference type="PANTHER" id="PTHR42866:SF2">
    <property type="entry name" value="3-DEOXY-MANNO-OCTULOSONATE CYTIDYLYLTRANSFERASE, MITOCHONDRIAL"/>
    <property type="match status" value="1"/>
</dbReference>
<dbReference type="Pfam" id="PF02348">
    <property type="entry name" value="CTP_transf_3"/>
    <property type="match status" value="1"/>
</dbReference>
<dbReference type="SUPFAM" id="SSF53448">
    <property type="entry name" value="Nucleotide-diphospho-sugar transferases"/>
    <property type="match status" value="1"/>
</dbReference>
<comment type="function">
    <text evidence="1">Activates KDO (a required 8-carbon sugar) for incorporation into bacterial lipopolysaccharide in Gram-negative bacteria.</text>
</comment>
<comment type="catalytic activity">
    <reaction evidence="1">
        <text>3-deoxy-alpha-D-manno-oct-2-ulosonate + CTP = CMP-3-deoxy-beta-D-manno-octulosonate + diphosphate</text>
        <dbReference type="Rhea" id="RHEA:23448"/>
        <dbReference type="ChEBI" id="CHEBI:33019"/>
        <dbReference type="ChEBI" id="CHEBI:37563"/>
        <dbReference type="ChEBI" id="CHEBI:85986"/>
        <dbReference type="ChEBI" id="CHEBI:85987"/>
        <dbReference type="EC" id="2.7.7.38"/>
    </reaction>
</comment>
<comment type="pathway">
    <text evidence="1">Nucleotide-sugar biosynthesis; CMP-3-deoxy-D-manno-octulosonate biosynthesis; CMP-3-deoxy-D-manno-octulosonate from 3-deoxy-D-manno-octulosonate and CTP: step 1/1.</text>
</comment>
<comment type="pathway">
    <text evidence="1">Bacterial outer membrane biogenesis; lipopolysaccharide biosynthesis.</text>
</comment>
<comment type="subcellular location">
    <subcellularLocation>
        <location evidence="1">Cytoplasm</location>
    </subcellularLocation>
</comment>
<comment type="similarity">
    <text evidence="1">Belongs to the KdsB family.</text>
</comment>
<keyword id="KW-0963">Cytoplasm</keyword>
<keyword id="KW-0448">Lipopolysaccharide biosynthesis</keyword>
<keyword id="KW-0548">Nucleotidyltransferase</keyword>
<keyword id="KW-1185">Reference proteome</keyword>
<keyword id="KW-0808">Transferase</keyword>
<gene>
    <name evidence="1" type="primary">kdsB</name>
    <name type="ordered locus">Glov_1728</name>
</gene>
<protein>
    <recommendedName>
        <fullName evidence="1">3-deoxy-manno-octulosonate cytidylyltransferase</fullName>
        <ecNumber evidence="1">2.7.7.38</ecNumber>
    </recommendedName>
    <alternativeName>
        <fullName evidence="1">CMP-2-keto-3-deoxyoctulosonic acid synthase</fullName>
        <shortName evidence="1">CKS</shortName>
        <shortName evidence="1">CMP-KDO synthase</shortName>
    </alternativeName>
</protein>
<name>KDSB_TRIL1</name>
<evidence type="ECO:0000255" key="1">
    <source>
        <dbReference type="HAMAP-Rule" id="MF_00057"/>
    </source>
</evidence>
<organism>
    <name type="scientific">Trichlorobacter lovleyi (strain ATCC BAA-1151 / DSM 17278 / SZ)</name>
    <name type="common">Geobacter lovleyi</name>
    <dbReference type="NCBI Taxonomy" id="398767"/>
    <lineage>
        <taxon>Bacteria</taxon>
        <taxon>Pseudomonadati</taxon>
        <taxon>Thermodesulfobacteriota</taxon>
        <taxon>Desulfuromonadia</taxon>
        <taxon>Geobacterales</taxon>
        <taxon>Geobacteraceae</taxon>
        <taxon>Trichlorobacter</taxon>
    </lineage>
</organism>
<proteinExistence type="inferred from homology"/>
<feature type="chain" id="PRO_1000091874" description="3-deoxy-manno-octulosonate cytidylyltransferase">
    <location>
        <begin position="1"/>
        <end position="252"/>
    </location>
</feature>
<accession>B3EAK6</accession>